<name>GPHA2_HUMAN</name>
<keyword id="KW-1015">Disulfide bond</keyword>
<keyword id="KW-0325">Glycoprotein</keyword>
<keyword id="KW-0372">Hormone</keyword>
<keyword id="KW-1267">Proteomics identification</keyword>
<keyword id="KW-1185">Reference proteome</keyword>
<keyword id="KW-0964">Secreted</keyword>
<keyword id="KW-0732">Signal</keyword>
<evidence type="ECO:0000255" key="1"/>
<evidence type="ECO:0000255" key="2">
    <source>
        <dbReference type="PROSITE-ProRule" id="PRU00039"/>
    </source>
</evidence>
<evidence type="ECO:0000269" key="3">
    <source>
    </source>
</evidence>
<evidence type="ECO:0000269" key="4">
    <source>
    </source>
</evidence>
<evidence type="ECO:0000305" key="5"/>
<dbReference type="EMBL" id="AF260739">
    <property type="protein sequence ID" value="AAK51638.1"/>
    <property type="molecule type" value="mRNA"/>
</dbReference>
<dbReference type="EMBL" id="BC093960">
    <property type="protein sequence ID" value="AAH93960.1"/>
    <property type="molecule type" value="mRNA"/>
</dbReference>
<dbReference type="EMBL" id="BC093962">
    <property type="protein sequence ID" value="AAH93962.1"/>
    <property type="molecule type" value="mRNA"/>
</dbReference>
<dbReference type="EMBL" id="BC101523">
    <property type="protein sequence ID" value="AAI01524.1"/>
    <property type="molecule type" value="mRNA"/>
</dbReference>
<dbReference type="CCDS" id="CCDS8086.1"/>
<dbReference type="RefSeq" id="NP_570125.1">
    <property type="nucleotide sequence ID" value="NM_130769.4"/>
</dbReference>
<dbReference type="RefSeq" id="XP_011543077.1">
    <property type="nucleotide sequence ID" value="XM_011544775.2"/>
</dbReference>
<dbReference type="RefSeq" id="XP_011543078.1">
    <property type="nucleotide sequence ID" value="XM_011544776.3"/>
</dbReference>
<dbReference type="RefSeq" id="XP_047282447.1">
    <property type="nucleotide sequence ID" value="XM_047426491.1"/>
</dbReference>
<dbReference type="RefSeq" id="XP_054223860.1">
    <property type="nucleotide sequence ID" value="XM_054367885.1"/>
</dbReference>
<dbReference type="RefSeq" id="XP_054223861.1">
    <property type="nucleotide sequence ID" value="XM_054367886.1"/>
</dbReference>
<dbReference type="BioGRID" id="128064">
    <property type="interactions" value="76"/>
</dbReference>
<dbReference type="ComplexPortal" id="CPX-7802">
    <property type="entry name" value="Thyrostimulin thyroid-stimulating hormone complex"/>
</dbReference>
<dbReference type="FunCoup" id="Q96T91">
    <property type="interactions" value="706"/>
</dbReference>
<dbReference type="IntAct" id="Q96T91">
    <property type="interactions" value="22"/>
</dbReference>
<dbReference type="STRING" id="9606.ENSP00000279168"/>
<dbReference type="GlyCosmos" id="Q96T91">
    <property type="glycosylation" value="2 sites, No reported glycans"/>
</dbReference>
<dbReference type="GlyGen" id="Q96T91">
    <property type="glycosylation" value="2 sites, 1 N-linked glycan (1 site)"/>
</dbReference>
<dbReference type="BioMuta" id="GPHA2"/>
<dbReference type="DMDM" id="48474600"/>
<dbReference type="MassIVE" id="Q96T91"/>
<dbReference type="PaxDb" id="9606-ENSP00000279168"/>
<dbReference type="PeptideAtlas" id="Q96T91"/>
<dbReference type="Antibodypedia" id="65614">
    <property type="antibodies" value="42 antibodies from 10 providers"/>
</dbReference>
<dbReference type="DNASU" id="170589"/>
<dbReference type="Ensembl" id="ENST00000279168.7">
    <property type="protein sequence ID" value="ENSP00000279168.2"/>
    <property type="gene ID" value="ENSG00000149735.7"/>
</dbReference>
<dbReference type="Ensembl" id="ENST00000533257.1">
    <property type="protein sequence ID" value="ENSP00000432918.1"/>
    <property type="gene ID" value="ENSG00000149735.7"/>
</dbReference>
<dbReference type="GeneID" id="170589"/>
<dbReference type="KEGG" id="hsa:170589"/>
<dbReference type="MANE-Select" id="ENST00000279168.7">
    <property type="protein sequence ID" value="ENSP00000279168.2"/>
    <property type="RefSeq nucleotide sequence ID" value="NM_130769.4"/>
    <property type="RefSeq protein sequence ID" value="NP_570125.1"/>
</dbReference>
<dbReference type="UCSC" id="uc001oca.3">
    <property type="organism name" value="human"/>
</dbReference>
<dbReference type="AGR" id="HGNC:18054"/>
<dbReference type="CTD" id="170589"/>
<dbReference type="DisGeNET" id="170589"/>
<dbReference type="GeneCards" id="GPHA2"/>
<dbReference type="HGNC" id="HGNC:18054">
    <property type="gene designation" value="GPHA2"/>
</dbReference>
<dbReference type="HPA" id="ENSG00000149735">
    <property type="expression patterns" value="Tissue enriched (pancreas)"/>
</dbReference>
<dbReference type="MIM" id="609651">
    <property type="type" value="gene"/>
</dbReference>
<dbReference type="neXtProt" id="NX_Q96T91"/>
<dbReference type="OpenTargets" id="ENSG00000149735"/>
<dbReference type="PharmGKB" id="PA28839"/>
<dbReference type="VEuPathDB" id="HostDB:ENSG00000149735"/>
<dbReference type="eggNOG" id="ENOG502S2RQ">
    <property type="taxonomic scope" value="Eukaryota"/>
</dbReference>
<dbReference type="GeneTree" id="ENSGT00390000009379"/>
<dbReference type="HOGENOM" id="CLU_134026_1_0_1"/>
<dbReference type="InParanoid" id="Q96T91"/>
<dbReference type="OMA" id="CTISKMQ"/>
<dbReference type="OrthoDB" id="9413153at2759"/>
<dbReference type="PAN-GO" id="Q96T91">
    <property type="GO annotations" value="3 GO annotations based on evolutionary models"/>
</dbReference>
<dbReference type="PhylomeDB" id="Q96T91"/>
<dbReference type="TreeFam" id="TF332313"/>
<dbReference type="PathwayCommons" id="Q96T91"/>
<dbReference type="Reactome" id="R-HSA-375281">
    <property type="pathway name" value="Hormone ligand-binding receptors"/>
</dbReference>
<dbReference type="Reactome" id="R-HSA-418555">
    <property type="pathway name" value="G alpha (s) signalling events"/>
</dbReference>
<dbReference type="SignaLink" id="Q96T91"/>
<dbReference type="SIGNOR" id="Q96T91"/>
<dbReference type="BioGRID-ORCS" id="170589">
    <property type="hits" value="10 hits in 1135 CRISPR screens"/>
</dbReference>
<dbReference type="ChiTaRS" id="GPHA2">
    <property type="organism name" value="human"/>
</dbReference>
<dbReference type="GeneWiki" id="GPHA2"/>
<dbReference type="GenomeRNAi" id="170589"/>
<dbReference type="Pharos" id="Q96T91">
    <property type="development level" value="Tbio"/>
</dbReference>
<dbReference type="PRO" id="PR:Q96T91"/>
<dbReference type="Proteomes" id="UP000005640">
    <property type="component" value="Chromosome 11"/>
</dbReference>
<dbReference type="RNAct" id="Q96T91">
    <property type="molecule type" value="protein"/>
</dbReference>
<dbReference type="Bgee" id="ENSG00000149735">
    <property type="expression patterns" value="Expressed in oocyte and 137 other cell types or tissues"/>
</dbReference>
<dbReference type="ExpressionAtlas" id="Q96T91">
    <property type="expression patterns" value="baseline and differential"/>
</dbReference>
<dbReference type="GO" id="GO:0005576">
    <property type="term" value="C:extracellular region"/>
    <property type="evidence" value="ECO:0000314"/>
    <property type="project" value="MGI"/>
</dbReference>
<dbReference type="GO" id="GO:0005615">
    <property type="term" value="C:extracellular space"/>
    <property type="evidence" value="ECO:0000318"/>
    <property type="project" value="GO_Central"/>
</dbReference>
<dbReference type="GO" id="GO:0005179">
    <property type="term" value="F:hormone activity"/>
    <property type="evidence" value="ECO:0007669"/>
    <property type="project" value="UniProtKB-KW"/>
</dbReference>
<dbReference type="GO" id="GO:0046982">
    <property type="term" value="F:protein heterodimerization activity"/>
    <property type="evidence" value="ECO:0000314"/>
    <property type="project" value="UniProtKB"/>
</dbReference>
<dbReference type="GO" id="GO:0031531">
    <property type="term" value="F:thyrotropin-releasing hormone receptor binding"/>
    <property type="evidence" value="ECO:0000315"/>
    <property type="project" value="UniProtKB"/>
</dbReference>
<dbReference type="GO" id="GO:0007189">
    <property type="term" value="P:adenylate cyclase-activating G protein-coupled receptor signaling pathway"/>
    <property type="evidence" value="ECO:0000315"/>
    <property type="project" value="UniProtKB"/>
</dbReference>
<dbReference type="GO" id="GO:0007166">
    <property type="term" value="P:cell surface receptor signaling pathway"/>
    <property type="evidence" value="ECO:0000315"/>
    <property type="project" value="UniProtKB"/>
</dbReference>
<dbReference type="FunFam" id="2.10.90.10:FF:000027">
    <property type="entry name" value="Glycoprotein hormone alpha 2"/>
    <property type="match status" value="1"/>
</dbReference>
<dbReference type="Gene3D" id="2.10.90.10">
    <property type="entry name" value="Cystine-knot cytokines"/>
    <property type="match status" value="1"/>
</dbReference>
<dbReference type="InterPro" id="IPR006207">
    <property type="entry name" value="Cys_knot_C"/>
</dbReference>
<dbReference type="InterPro" id="IPR029034">
    <property type="entry name" value="Cystine-knot_cytokine"/>
</dbReference>
<dbReference type="InterPro" id="IPR000476">
    <property type="entry name" value="Glyco_hormone"/>
</dbReference>
<dbReference type="InterPro" id="IPR052680">
    <property type="entry name" value="Glyco_Hormone_Alpha"/>
</dbReference>
<dbReference type="PANTHER" id="PTHR31129">
    <property type="entry name" value="GLYCOPROTEIN HORMONE ALPHA-2"/>
    <property type="match status" value="1"/>
</dbReference>
<dbReference type="PANTHER" id="PTHR31129:SF2">
    <property type="entry name" value="GLYCOPROTEIN HORMONE ALPHA-2"/>
    <property type="match status" value="1"/>
</dbReference>
<dbReference type="SUPFAM" id="SSF57501">
    <property type="entry name" value="Cystine-knot cytokines"/>
    <property type="match status" value="1"/>
</dbReference>
<dbReference type="PROSITE" id="PS01225">
    <property type="entry name" value="CTCK_2"/>
    <property type="match status" value="1"/>
</dbReference>
<dbReference type="PROSITE" id="PS50277">
    <property type="entry name" value="GLYCO_HORMONE_ALPHA_3"/>
    <property type="match status" value="1"/>
</dbReference>
<feature type="signal peptide" evidence="1">
    <location>
        <begin position="1"/>
        <end position="23"/>
    </location>
</feature>
<feature type="chain" id="PRO_0000011672" description="Glycoprotein hormone alpha-2">
    <location>
        <begin position="24"/>
        <end position="129"/>
    </location>
</feature>
<feature type="glycosylation site" description="N-linked (GlcNAc...) asparagine" evidence="1">
    <location>
        <position position="37"/>
    </location>
</feature>
<feature type="glycosylation site" description="N-linked (GlcNAc...) asparagine" evidence="1">
    <location>
        <position position="81"/>
    </location>
</feature>
<feature type="disulfide bond" evidence="2">
    <location>
        <begin position="31"/>
        <end position="89"/>
    </location>
</feature>
<feature type="disulfide bond" evidence="2">
    <location>
        <begin position="48"/>
        <end position="103"/>
    </location>
</feature>
<feature type="disulfide bond" evidence="2">
    <location>
        <begin position="57"/>
        <end position="119"/>
    </location>
</feature>
<feature type="disulfide bond" evidence="2">
    <location>
        <begin position="61"/>
        <end position="121"/>
    </location>
</feature>
<gene>
    <name type="primary">GPHA2</name>
    <name type="synonym">GPA2</name>
    <name type="synonym">ZSIG51</name>
</gene>
<sequence length="129" mass="14163">MPMASPQTLVLYLLVLAVTEAWGQEAVIPGCHLHPFNVTVRSDRQGTCQGSHVAQACVGHCESSAFPSRYSVLVASGYRHNITSVSQCCTISGLKKVKVQLQCVGSRREELEIFTARACQCDMCRLSRY</sequence>
<reference key="1">
    <citation type="submission" date="2000-04" db="EMBL/GenBank/DDBJ databases">
        <title>A novel cysteine knot protein expressed in pancreatic acinar cells.</title>
        <authorList>
            <person name="Ching A."/>
            <person name="Gilbert T."/>
            <person name="Lok S."/>
            <person name="Sheppard P."/>
            <person name="Webster P."/>
            <person name="O'Hara P.J."/>
        </authorList>
    </citation>
    <scope>NUCLEOTIDE SEQUENCE [MRNA]</scope>
</reference>
<reference key="2">
    <citation type="journal article" date="2004" name="Genome Res.">
        <title>The status, quality, and expansion of the NIH full-length cDNA project: the Mammalian Gene Collection (MGC).</title>
        <authorList>
            <consortium name="The MGC Project Team"/>
        </authorList>
    </citation>
    <scope>NUCLEOTIDE SEQUENCE [LARGE SCALE MRNA]</scope>
    <source>
        <tissue>Brain</tissue>
    </source>
</reference>
<reference key="3">
    <citation type="journal article" date="2002" name="J. Clin. Invest.">
        <title>Thyrostimulin, a heterodimer of two new human glycoprotein hormone subunits, activates the thyroid-stimulating hormone receptor.</title>
        <authorList>
            <person name="Nakabayashi K."/>
            <person name="Matsumi H."/>
            <person name="Bhalla A."/>
            <person name="Bae J."/>
            <person name="Mosselman S."/>
            <person name="Hsu S.Y."/>
            <person name="Hsueh A.J.W."/>
        </authorList>
    </citation>
    <scope>FUNCTION</scope>
    <scope>SUBUNIT</scope>
    <scope>INTERACTION WITH TSHR</scope>
    <scope>GLYCOSYLATION</scope>
</reference>
<reference key="4">
    <citation type="journal article" date="2002" name="Mol. Endocrinol.">
        <title>Evolution of glycoprotein hormone subunit genes in bilateral metazoa: identification of two novel human glycoprotein hormone subunit family genes, GPA2 and GPB5.</title>
        <authorList>
            <person name="Hsu S.Y."/>
            <person name="Nakabayashi K."/>
            <person name="Bhalla A."/>
        </authorList>
    </citation>
    <scope>TISSUE SPECIFICITY</scope>
</reference>
<protein>
    <recommendedName>
        <fullName>Glycoprotein hormone alpha-2</fullName>
    </recommendedName>
    <alternativeName>
        <fullName>Putative secreted protein Zsig51</fullName>
    </alternativeName>
    <alternativeName>
        <fullName>Thyrostimulin subunit alpha</fullName>
    </alternativeName>
</protein>
<organism>
    <name type="scientific">Homo sapiens</name>
    <name type="common">Human</name>
    <dbReference type="NCBI Taxonomy" id="9606"/>
    <lineage>
        <taxon>Eukaryota</taxon>
        <taxon>Metazoa</taxon>
        <taxon>Chordata</taxon>
        <taxon>Craniata</taxon>
        <taxon>Vertebrata</taxon>
        <taxon>Euteleostomi</taxon>
        <taxon>Mammalia</taxon>
        <taxon>Eutheria</taxon>
        <taxon>Euarchontoglires</taxon>
        <taxon>Primates</taxon>
        <taxon>Haplorrhini</taxon>
        <taxon>Catarrhini</taxon>
        <taxon>Hominidae</taxon>
        <taxon>Homo</taxon>
    </lineage>
</organism>
<accession>Q96T91</accession>
<accession>Q52LE2</accession>
<comment type="function">
    <text evidence="3">Functions as a heterodimeric glycoprotein hormone with GPHB5 able to bind and activate the thyroid-stimulating hormone receptor (TSHR), leading to increased cAMP production (PubMed:12045258). Plays a central role in controlling thyroid cell metabolism (PubMed:12045258).</text>
</comment>
<comment type="subunit">
    <text evidence="3">Heterodimer with GPHB5; this heterodimer interacts with thyroid-stimulating hormone receptor (TSHR), and hence stimulates cAMP production.</text>
</comment>
<comment type="interaction">
    <interactant intactId="EBI-11659696">
        <id>Q96T91</id>
    </interactant>
    <interactant intactId="EBI-11659720">
        <id>Q86YW7</id>
        <label>GPHB5</label>
    </interactant>
    <organismsDiffer>false</organismsDiffer>
    <experiments>3</experiments>
</comment>
<comment type="subcellular location">
    <subcellularLocation>
        <location>Secreted</location>
    </subcellularLocation>
</comment>
<comment type="tissue specificity">
    <text evidence="4">Found in a variety of tissues.</text>
</comment>
<comment type="PTM">
    <text evidence="3">Glycosylated.</text>
</comment>
<comment type="similarity">
    <text evidence="5">Belongs to the glycoprotein hormones subunit alpha family.</text>
</comment>
<proteinExistence type="evidence at protein level"/>